<gene>
    <name evidence="1" type="primary">cca</name>
    <name type="ordered locus">MGAS10270_Spy0731</name>
</gene>
<organism>
    <name type="scientific">Streptococcus pyogenes serotype M2 (strain MGAS10270)</name>
    <dbReference type="NCBI Taxonomy" id="370552"/>
    <lineage>
        <taxon>Bacteria</taxon>
        <taxon>Bacillati</taxon>
        <taxon>Bacillota</taxon>
        <taxon>Bacilli</taxon>
        <taxon>Lactobacillales</taxon>
        <taxon>Streptococcaceae</taxon>
        <taxon>Streptococcus</taxon>
    </lineage>
</organism>
<feature type="chain" id="PRO_1000054339" description="CCA-adding enzyme">
    <location>
        <begin position="1"/>
        <end position="402"/>
    </location>
</feature>
<feature type="binding site" evidence="1">
    <location>
        <position position="32"/>
    </location>
    <ligand>
        <name>ATP</name>
        <dbReference type="ChEBI" id="CHEBI:30616"/>
    </ligand>
</feature>
<feature type="binding site" evidence="1">
    <location>
        <position position="32"/>
    </location>
    <ligand>
        <name>CTP</name>
        <dbReference type="ChEBI" id="CHEBI:37563"/>
    </ligand>
</feature>
<feature type="binding site" evidence="1">
    <location>
        <position position="35"/>
    </location>
    <ligand>
        <name>ATP</name>
        <dbReference type="ChEBI" id="CHEBI:30616"/>
    </ligand>
</feature>
<feature type="binding site" evidence="1">
    <location>
        <position position="35"/>
    </location>
    <ligand>
        <name>CTP</name>
        <dbReference type="ChEBI" id="CHEBI:37563"/>
    </ligand>
</feature>
<feature type="binding site" evidence="1">
    <location>
        <position position="45"/>
    </location>
    <ligand>
        <name>Mg(2+)</name>
        <dbReference type="ChEBI" id="CHEBI:18420"/>
    </ligand>
</feature>
<feature type="binding site" evidence="1">
    <location>
        <position position="47"/>
    </location>
    <ligand>
        <name>Mg(2+)</name>
        <dbReference type="ChEBI" id="CHEBI:18420"/>
    </ligand>
</feature>
<feature type="binding site" evidence="1">
    <location>
        <position position="116"/>
    </location>
    <ligand>
        <name>ATP</name>
        <dbReference type="ChEBI" id="CHEBI:30616"/>
    </ligand>
</feature>
<feature type="binding site" evidence="1">
    <location>
        <position position="116"/>
    </location>
    <ligand>
        <name>CTP</name>
        <dbReference type="ChEBI" id="CHEBI:37563"/>
    </ligand>
</feature>
<feature type="binding site" evidence="1">
    <location>
        <position position="159"/>
    </location>
    <ligand>
        <name>ATP</name>
        <dbReference type="ChEBI" id="CHEBI:30616"/>
    </ligand>
</feature>
<feature type="binding site" evidence="1">
    <location>
        <position position="159"/>
    </location>
    <ligand>
        <name>CTP</name>
        <dbReference type="ChEBI" id="CHEBI:37563"/>
    </ligand>
</feature>
<feature type="binding site" evidence="1">
    <location>
        <position position="162"/>
    </location>
    <ligand>
        <name>ATP</name>
        <dbReference type="ChEBI" id="CHEBI:30616"/>
    </ligand>
</feature>
<feature type="binding site" evidence="1">
    <location>
        <position position="162"/>
    </location>
    <ligand>
        <name>CTP</name>
        <dbReference type="ChEBI" id="CHEBI:37563"/>
    </ligand>
</feature>
<feature type="binding site" evidence="1">
    <location>
        <position position="165"/>
    </location>
    <ligand>
        <name>ATP</name>
        <dbReference type="ChEBI" id="CHEBI:30616"/>
    </ligand>
</feature>
<feature type="binding site" evidence="1">
    <location>
        <position position="165"/>
    </location>
    <ligand>
        <name>CTP</name>
        <dbReference type="ChEBI" id="CHEBI:37563"/>
    </ligand>
</feature>
<feature type="binding site" evidence="1">
    <location>
        <position position="168"/>
    </location>
    <ligand>
        <name>ATP</name>
        <dbReference type="ChEBI" id="CHEBI:30616"/>
    </ligand>
</feature>
<feature type="binding site" evidence="1">
    <location>
        <position position="168"/>
    </location>
    <ligand>
        <name>CTP</name>
        <dbReference type="ChEBI" id="CHEBI:37563"/>
    </ligand>
</feature>
<proteinExistence type="inferred from homology"/>
<reference key="1">
    <citation type="journal article" date="2006" name="Proc. Natl. Acad. Sci. U.S.A.">
        <title>Molecular genetic anatomy of inter- and intraserotype variation in the human bacterial pathogen group A Streptococcus.</title>
        <authorList>
            <person name="Beres S.B."/>
            <person name="Richter E.W."/>
            <person name="Nagiec M.J."/>
            <person name="Sumby P."/>
            <person name="Porcella S.F."/>
            <person name="DeLeo F.R."/>
            <person name="Musser J.M."/>
        </authorList>
    </citation>
    <scope>NUCLEOTIDE SEQUENCE [LARGE SCALE GENOMIC DNA]</scope>
    <source>
        <strain>MGAS10270</strain>
    </source>
</reference>
<evidence type="ECO:0000255" key="1">
    <source>
        <dbReference type="HAMAP-Rule" id="MF_01263"/>
    </source>
</evidence>
<comment type="function">
    <text evidence="1">Catalyzes the addition and repair of the essential 3'-terminal CCA sequence in tRNAs without using a nucleic acid template. Adds these three nucleotides in the order of C, C, and A to the tRNA nucleotide-73, using CTP and ATP as substrates and producing inorganic pyrophosphate. tRNA 3'-terminal CCA addition is required both for tRNA processing and repair. Also involved in tRNA surveillance by mediating tandem CCA addition to generate a CCACCA at the 3' terminus of unstable tRNAs. While stable tRNAs receive only 3'-terminal CCA, unstable tRNAs are marked with CCACCA and rapidly degraded.</text>
</comment>
<comment type="catalytic activity">
    <reaction evidence="1">
        <text>a tRNA precursor + 2 CTP + ATP = a tRNA with a 3' CCA end + 3 diphosphate</text>
        <dbReference type="Rhea" id="RHEA:14433"/>
        <dbReference type="Rhea" id="RHEA-COMP:10465"/>
        <dbReference type="Rhea" id="RHEA-COMP:10468"/>
        <dbReference type="ChEBI" id="CHEBI:30616"/>
        <dbReference type="ChEBI" id="CHEBI:33019"/>
        <dbReference type="ChEBI" id="CHEBI:37563"/>
        <dbReference type="ChEBI" id="CHEBI:74896"/>
        <dbReference type="ChEBI" id="CHEBI:83071"/>
        <dbReference type="EC" id="2.7.7.72"/>
    </reaction>
</comment>
<comment type="catalytic activity">
    <reaction evidence="1">
        <text>a tRNA with a 3' CCA end + 2 CTP + ATP = a tRNA with a 3' CCACCA end + 3 diphosphate</text>
        <dbReference type="Rhea" id="RHEA:76235"/>
        <dbReference type="Rhea" id="RHEA-COMP:10468"/>
        <dbReference type="Rhea" id="RHEA-COMP:18655"/>
        <dbReference type="ChEBI" id="CHEBI:30616"/>
        <dbReference type="ChEBI" id="CHEBI:33019"/>
        <dbReference type="ChEBI" id="CHEBI:37563"/>
        <dbReference type="ChEBI" id="CHEBI:83071"/>
        <dbReference type="ChEBI" id="CHEBI:195187"/>
    </reaction>
    <physiologicalReaction direction="left-to-right" evidence="1">
        <dbReference type="Rhea" id="RHEA:76236"/>
    </physiologicalReaction>
</comment>
<comment type="cofactor">
    <cofactor evidence="1">
        <name>Mg(2+)</name>
        <dbReference type="ChEBI" id="CHEBI:18420"/>
    </cofactor>
</comment>
<comment type="subunit">
    <text evidence="1">Homodimer.</text>
</comment>
<comment type="miscellaneous">
    <text evidence="1">A single active site specifically recognizes both ATP and CTP and is responsible for their addition.</text>
</comment>
<comment type="similarity">
    <text evidence="1">Belongs to the tRNA nucleotidyltransferase/poly(A) polymerase family. Bacterial CCA-adding enzyme type 3 subfamily.</text>
</comment>
<sequence length="402" mass="46101">MKLMTMPSEFQKALPILTKIKEAGYEAYFVGGSVRDVLLGRPIHDVDIATSSYPEETKAIFNRTVDVGIEHGTVLVLENGGEYEITTFRTEDVYVDYRRPSQVSFVRSLEEDLKRRDFTVNALALDENGQVIDKFRGLIDLKQKRLRAVGKAEERFEEDALRIMRGFRFAASLDFDIEATTFEAMRSHSPLLEKISVERSFTEFDKLLMAPHWRKGISAMIACQAYDYLPGLKQQEAGLNHLIVSLKDNFTFSDHHQAWAYVMISLAIEDPKSFLKAWKTSNDFQRYVTKLIALYRIRQERSFEKLDIYQYGKKMASLVEDLRKAQSLSVDMDHINTLDQALVIHDKHDIVLNGSHLIKDFGMKPGPQLGLMLEKVELAIVEGRLDNDFTTIEAFVREELAT</sequence>
<keyword id="KW-0067">ATP-binding</keyword>
<keyword id="KW-0460">Magnesium</keyword>
<keyword id="KW-0479">Metal-binding</keyword>
<keyword id="KW-0547">Nucleotide-binding</keyword>
<keyword id="KW-0548">Nucleotidyltransferase</keyword>
<keyword id="KW-0692">RNA repair</keyword>
<keyword id="KW-0694">RNA-binding</keyword>
<keyword id="KW-0808">Transferase</keyword>
<keyword id="KW-0819">tRNA processing</keyword>
<name>CCA_STRPD</name>
<protein>
    <recommendedName>
        <fullName evidence="1">CCA-adding enzyme</fullName>
        <ecNumber evidence="1">2.7.7.72</ecNumber>
    </recommendedName>
    <alternativeName>
        <fullName evidence="1">CCA tRNA nucleotidyltransferase</fullName>
    </alternativeName>
    <alternativeName>
        <fullName evidence="1">tRNA CCA-pyrophosphorylase</fullName>
    </alternativeName>
    <alternativeName>
        <fullName evidence="1">tRNA adenylyl-/cytidylyl- transferase</fullName>
    </alternativeName>
    <alternativeName>
        <fullName evidence="1">tRNA nucleotidyltransferase</fullName>
    </alternativeName>
    <alternativeName>
        <fullName evidence="1">tRNA-NT</fullName>
    </alternativeName>
</protein>
<dbReference type="EC" id="2.7.7.72" evidence="1"/>
<dbReference type="EMBL" id="CP000260">
    <property type="protein sequence ID" value="ABF33796.1"/>
    <property type="molecule type" value="Genomic_DNA"/>
</dbReference>
<dbReference type="SMR" id="Q1JHE0"/>
<dbReference type="KEGG" id="sph:MGAS10270_Spy0731"/>
<dbReference type="HOGENOM" id="CLU_015961_3_0_9"/>
<dbReference type="Proteomes" id="UP000002436">
    <property type="component" value="Chromosome"/>
</dbReference>
<dbReference type="GO" id="GO:0005524">
    <property type="term" value="F:ATP binding"/>
    <property type="evidence" value="ECO:0007669"/>
    <property type="project" value="UniProtKB-UniRule"/>
</dbReference>
<dbReference type="GO" id="GO:0004810">
    <property type="term" value="F:CCA tRNA nucleotidyltransferase activity"/>
    <property type="evidence" value="ECO:0007669"/>
    <property type="project" value="UniProtKB-UniRule"/>
</dbReference>
<dbReference type="GO" id="GO:0000287">
    <property type="term" value="F:magnesium ion binding"/>
    <property type="evidence" value="ECO:0007669"/>
    <property type="project" value="UniProtKB-UniRule"/>
</dbReference>
<dbReference type="GO" id="GO:0000049">
    <property type="term" value="F:tRNA binding"/>
    <property type="evidence" value="ECO:0007669"/>
    <property type="project" value="UniProtKB-UniRule"/>
</dbReference>
<dbReference type="GO" id="GO:0042245">
    <property type="term" value="P:RNA repair"/>
    <property type="evidence" value="ECO:0007669"/>
    <property type="project" value="UniProtKB-KW"/>
</dbReference>
<dbReference type="GO" id="GO:0001680">
    <property type="term" value="P:tRNA 3'-terminal CCA addition"/>
    <property type="evidence" value="ECO:0007669"/>
    <property type="project" value="UniProtKB-UniRule"/>
</dbReference>
<dbReference type="CDD" id="cd05398">
    <property type="entry name" value="NT_ClassII-CCAase"/>
    <property type="match status" value="1"/>
</dbReference>
<dbReference type="Gene3D" id="1.10.110.30">
    <property type="match status" value="1"/>
</dbReference>
<dbReference type="Gene3D" id="1.10.246.80">
    <property type="match status" value="1"/>
</dbReference>
<dbReference type="Gene3D" id="1.20.58.560">
    <property type="match status" value="1"/>
</dbReference>
<dbReference type="Gene3D" id="3.30.460.10">
    <property type="entry name" value="Beta Polymerase, domain 2"/>
    <property type="match status" value="1"/>
</dbReference>
<dbReference type="HAMAP" id="MF_01263">
    <property type="entry name" value="CCA_bact_type3"/>
    <property type="match status" value="1"/>
</dbReference>
<dbReference type="InterPro" id="IPR050264">
    <property type="entry name" value="Bact_CCA-adding_enz_type3_sf"/>
</dbReference>
<dbReference type="InterPro" id="IPR032810">
    <property type="entry name" value="CCA-adding_enz_C"/>
</dbReference>
<dbReference type="InterPro" id="IPR023068">
    <property type="entry name" value="CCA-adding_enz_firmicutes"/>
</dbReference>
<dbReference type="InterPro" id="IPR043519">
    <property type="entry name" value="NT_sf"/>
</dbReference>
<dbReference type="InterPro" id="IPR002646">
    <property type="entry name" value="PolA_pol_head_dom"/>
</dbReference>
<dbReference type="InterPro" id="IPR032828">
    <property type="entry name" value="PolyA_RNA-bd"/>
</dbReference>
<dbReference type="NCBIfam" id="NF009814">
    <property type="entry name" value="PRK13299.1"/>
    <property type="match status" value="1"/>
</dbReference>
<dbReference type="PANTHER" id="PTHR46173">
    <property type="entry name" value="CCA TRNA NUCLEOTIDYLTRANSFERASE 1, MITOCHONDRIAL"/>
    <property type="match status" value="1"/>
</dbReference>
<dbReference type="PANTHER" id="PTHR46173:SF1">
    <property type="entry name" value="CCA TRNA NUCLEOTIDYLTRANSFERASE 1, MITOCHONDRIAL"/>
    <property type="match status" value="1"/>
</dbReference>
<dbReference type="Pfam" id="PF01743">
    <property type="entry name" value="PolyA_pol"/>
    <property type="match status" value="1"/>
</dbReference>
<dbReference type="Pfam" id="PF12627">
    <property type="entry name" value="PolyA_pol_RNAbd"/>
    <property type="match status" value="1"/>
</dbReference>
<dbReference type="Pfam" id="PF13735">
    <property type="entry name" value="tRNA_NucTran2_2"/>
    <property type="match status" value="1"/>
</dbReference>
<dbReference type="SUPFAM" id="SSF81301">
    <property type="entry name" value="Nucleotidyltransferase"/>
    <property type="match status" value="1"/>
</dbReference>
<dbReference type="SUPFAM" id="SSF81891">
    <property type="entry name" value="Poly A polymerase C-terminal region-like"/>
    <property type="match status" value="1"/>
</dbReference>
<accession>Q1JHE0</accession>